<accession>A5I7J2</accession>
<accession>A7G8S4</accession>
<feature type="chain" id="PRO_1000051779" description="Small ribosomal subunit protein uS8">
    <location>
        <begin position="1"/>
        <end position="132"/>
    </location>
</feature>
<sequence length="132" mass="14805">MVMSDPIADLLTRIRNANVVRHEVVEVPSSNIKKAIANIMLTEGYIRDLEEYRDGSVDMLRITMKYGQNKERIITGLKRISKPGLRVYCRKDETPKVLNGLGVAVVSTSKGIVTDREARKLGVGGEVLCYIW</sequence>
<name>RS8_CLOBH</name>
<gene>
    <name evidence="1" type="primary">rpsH</name>
    <name type="ordered locus">CBO3467</name>
    <name type="ordered locus">CLC_3411</name>
</gene>
<organism>
    <name type="scientific">Clostridium botulinum (strain Hall / ATCC 3502 / NCTC 13319 / Type A)</name>
    <dbReference type="NCBI Taxonomy" id="441771"/>
    <lineage>
        <taxon>Bacteria</taxon>
        <taxon>Bacillati</taxon>
        <taxon>Bacillota</taxon>
        <taxon>Clostridia</taxon>
        <taxon>Eubacteriales</taxon>
        <taxon>Clostridiaceae</taxon>
        <taxon>Clostridium</taxon>
    </lineage>
</organism>
<comment type="function">
    <text evidence="1">One of the primary rRNA binding proteins, it binds directly to 16S rRNA central domain where it helps coordinate assembly of the platform of the 30S subunit.</text>
</comment>
<comment type="subunit">
    <text evidence="1">Part of the 30S ribosomal subunit. Contacts proteins S5 and S12.</text>
</comment>
<comment type="similarity">
    <text evidence="1">Belongs to the universal ribosomal protein uS8 family.</text>
</comment>
<evidence type="ECO:0000255" key="1">
    <source>
        <dbReference type="HAMAP-Rule" id="MF_01302"/>
    </source>
</evidence>
<evidence type="ECO:0000305" key="2"/>
<proteinExistence type="inferred from homology"/>
<dbReference type="EMBL" id="CP000727">
    <property type="protein sequence ID" value="ABS36544.1"/>
    <property type="molecule type" value="Genomic_DNA"/>
</dbReference>
<dbReference type="EMBL" id="AM412317">
    <property type="protein sequence ID" value="CAL85027.1"/>
    <property type="molecule type" value="Genomic_DNA"/>
</dbReference>
<dbReference type="RefSeq" id="WP_003357687.1">
    <property type="nucleotide sequence ID" value="NC_009698.1"/>
</dbReference>
<dbReference type="RefSeq" id="YP_001255948.1">
    <property type="nucleotide sequence ID" value="NC_009495.1"/>
</dbReference>
<dbReference type="RefSeq" id="YP_001389189.1">
    <property type="nucleotide sequence ID" value="NC_009698.1"/>
</dbReference>
<dbReference type="SMR" id="A5I7J2"/>
<dbReference type="GeneID" id="5184529"/>
<dbReference type="KEGG" id="cbh:CLC_3411"/>
<dbReference type="KEGG" id="cbo:CBO3467"/>
<dbReference type="PATRIC" id="fig|413999.7.peg.3443"/>
<dbReference type="HOGENOM" id="CLU_098428_0_2_9"/>
<dbReference type="PRO" id="PR:A5I7J2"/>
<dbReference type="Proteomes" id="UP000001986">
    <property type="component" value="Chromosome"/>
</dbReference>
<dbReference type="GO" id="GO:0022627">
    <property type="term" value="C:cytosolic small ribosomal subunit"/>
    <property type="evidence" value="ECO:0000318"/>
    <property type="project" value="GO_Central"/>
</dbReference>
<dbReference type="GO" id="GO:0019843">
    <property type="term" value="F:rRNA binding"/>
    <property type="evidence" value="ECO:0007669"/>
    <property type="project" value="UniProtKB-UniRule"/>
</dbReference>
<dbReference type="GO" id="GO:0003735">
    <property type="term" value="F:structural constituent of ribosome"/>
    <property type="evidence" value="ECO:0000318"/>
    <property type="project" value="GO_Central"/>
</dbReference>
<dbReference type="GO" id="GO:0006412">
    <property type="term" value="P:translation"/>
    <property type="evidence" value="ECO:0007669"/>
    <property type="project" value="UniProtKB-UniRule"/>
</dbReference>
<dbReference type="FunFam" id="3.30.1370.30:FF:000002">
    <property type="entry name" value="30S ribosomal protein S8"/>
    <property type="match status" value="1"/>
</dbReference>
<dbReference type="FunFam" id="3.30.1490.10:FF:000001">
    <property type="entry name" value="30S ribosomal protein S8"/>
    <property type="match status" value="1"/>
</dbReference>
<dbReference type="Gene3D" id="3.30.1370.30">
    <property type="match status" value="1"/>
</dbReference>
<dbReference type="Gene3D" id="3.30.1490.10">
    <property type="match status" value="1"/>
</dbReference>
<dbReference type="HAMAP" id="MF_01302_B">
    <property type="entry name" value="Ribosomal_uS8_B"/>
    <property type="match status" value="1"/>
</dbReference>
<dbReference type="InterPro" id="IPR000630">
    <property type="entry name" value="Ribosomal_uS8"/>
</dbReference>
<dbReference type="InterPro" id="IPR047863">
    <property type="entry name" value="Ribosomal_uS8_CS"/>
</dbReference>
<dbReference type="InterPro" id="IPR035987">
    <property type="entry name" value="Ribosomal_uS8_sf"/>
</dbReference>
<dbReference type="NCBIfam" id="NF001109">
    <property type="entry name" value="PRK00136.1"/>
    <property type="match status" value="1"/>
</dbReference>
<dbReference type="PANTHER" id="PTHR11758">
    <property type="entry name" value="40S RIBOSOMAL PROTEIN S15A"/>
    <property type="match status" value="1"/>
</dbReference>
<dbReference type="Pfam" id="PF00410">
    <property type="entry name" value="Ribosomal_S8"/>
    <property type="match status" value="1"/>
</dbReference>
<dbReference type="SUPFAM" id="SSF56047">
    <property type="entry name" value="Ribosomal protein S8"/>
    <property type="match status" value="1"/>
</dbReference>
<dbReference type="PROSITE" id="PS00053">
    <property type="entry name" value="RIBOSOMAL_S8"/>
    <property type="match status" value="1"/>
</dbReference>
<reference key="1">
    <citation type="journal article" date="2007" name="Genome Res.">
        <title>Genome sequence of a proteolytic (Group I) Clostridium botulinum strain Hall A and comparative analysis of the clostridial genomes.</title>
        <authorList>
            <person name="Sebaihia M."/>
            <person name="Peck M.W."/>
            <person name="Minton N.P."/>
            <person name="Thomson N.R."/>
            <person name="Holden M.T.G."/>
            <person name="Mitchell W.J."/>
            <person name="Carter A.T."/>
            <person name="Bentley S.D."/>
            <person name="Mason D.R."/>
            <person name="Crossman L."/>
            <person name="Paul C.J."/>
            <person name="Ivens A."/>
            <person name="Wells-Bennik M.H.J."/>
            <person name="Davis I.J."/>
            <person name="Cerdeno-Tarraga A.M."/>
            <person name="Churcher C."/>
            <person name="Quail M.A."/>
            <person name="Chillingworth T."/>
            <person name="Feltwell T."/>
            <person name="Fraser A."/>
            <person name="Goodhead I."/>
            <person name="Hance Z."/>
            <person name="Jagels K."/>
            <person name="Larke N."/>
            <person name="Maddison M."/>
            <person name="Moule S."/>
            <person name="Mungall K."/>
            <person name="Norbertczak H."/>
            <person name="Rabbinowitsch E."/>
            <person name="Sanders M."/>
            <person name="Simmonds M."/>
            <person name="White B."/>
            <person name="Whithead S."/>
            <person name="Parkhill J."/>
        </authorList>
    </citation>
    <scope>NUCLEOTIDE SEQUENCE [LARGE SCALE GENOMIC DNA]</scope>
    <source>
        <strain>Hall / ATCC 3502 / NCTC 13319 / Type A</strain>
    </source>
</reference>
<reference key="2">
    <citation type="journal article" date="2007" name="PLoS ONE">
        <title>Analysis of the neurotoxin complex genes in Clostridium botulinum A1-A4 and B1 strains: BoNT/A3, /Ba4 and /B1 clusters are located within plasmids.</title>
        <authorList>
            <person name="Smith T.J."/>
            <person name="Hill K.K."/>
            <person name="Foley B.T."/>
            <person name="Detter J.C."/>
            <person name="Munk A.C."/>
            <person name="Bruce D.C."/>
            <person name="Doggett N.A."/>
            <person name="Smith L.A."/>
            <person name="Marks J.D."/>
            <person name="Xie G."/>
            <person name="Brettin T.S."/>
        </authorList>
    </citation>
    <scope>NUCLEOTIDE SEQUENCE [LARGE SCALE GENOMIC DNA]</scope>
    <source>
        <strain>Hall / ATCC 3502 / NCTC 13319 / Type A</strain>
    </source>
</reference>
<keyword id="KW-1185">Reference proteome</keyword>
<keyword id="KW-0687">Ribonucleoprotein</keyword>
<keyword id="KW-0689">Ribosomal protein</keyword>
<keyword id="KW-0694">RNA-binding</keyword>
<keyword id="KW-0699">rRNA-binding</keyword>
<protein>
    <recommendedName>
        <fullName evidence="1">Small ribosomal subunit protein uS8</fullName>
    </recommendedName>
    <alternativeName>
        <fullName evidence="2">30S ribosomal protein S8</fullName>
    </alternativeName>
</protein>